<comment type="subcellular location">
    <subcellularLocation>
        <location evidence="1">Cell inner membrane</location>
        <topology evidence="1">Multi-pass membrane protein</topology>
    </subcellularLocation>
</comment>
<comment type="similarity">
    <text evidence="3">Belongs to the UPF0754 family.</text>
</comment>
<keyword id="KW-0997">Cell inner membrane</keyword>
<keyword id="KW-1003">Cell membrane</keyword>
<keyword id="KW-0472">Membrane</keyword>
<keyword id="KW-1185">Reference proteome</keyword>
<keyword id="KW-0812">Transmembrane</keyword>
<keyword id="KW-1133">Transmembrane helix</keyword>
<name>Y398_RIPO1</name>
<proteinExistence type="inferred from homology"/>
<reference key="1">
    <citation type="journal article" date="2011" name="MBio">
        <title>Novel metabolic attributes of the genus Cyanothece, comprising a group of unicellular nitrogen-fixing Cyanobacteria.</title>
        <authorList>
            <person name="Bandyopadhyay A."/>
            <person name="Elvitigala T."/>
            <person name="Welsh E."/>
            <person name="Stockel J."/>
            <person name="Liberton M."/>
            <person name="Min H."/>
            <person name="Sherman L.A."/>
            <person name="Pakrasi H.B."/>
        </authorList>
    </citation>
    <scope>NUCLEOTIDE SEQUENCE [LARGE SCALE GENOMIC DNA]</scope>
    <source>
        <strain>PCC 8801 / RF-1</strain>
    </source>
</reference>
<evidence type="ECO:0000250" key="1"/>
<evidence type="ECO:0000255" key="2"/>
<evidence type="ECO:0000305" key="3"/>
<dbReference type="EMBL" id="CP001287">
    <property type="protein sequence ID" value="ACK64496.1"/>
    <property type="molecule type" value="Genomic_DNA"/>
</dbReference>
<dbReference type="RefSeq" id="WP_012593773.1">
    <property type="nucleotide sequence ID" value="NC_011726.1"/>
</dbReference>
<dbReference type="SMR" id="B7JUB6"/>
<dbReference type="STRING" id="41431.PCC8801_0398"/>
<dbReference type="KEGG" id="cyp:PCC8801_0398"/>
<dbReference type="eggNOG" id="COG4399">
    <property type="taxonomic scope" value="Bacteria"/>
</dbReference>
<dbReference type="HOGENOM" id="CLU_042384_0_1_3"/>
<dbReference type="OrthoDB" id="9787430at2"/>
<dbReference type="Proteomes" id="UP000008204">
    <property type="component" value="Chromosome"/>
</dbReference>
<dbReference type="GO" id="GO:0005886">
    <property type="term" value="C:plasma membrane"/>
    <property type="evidence" value="ECO:0007669"/>
    <property type="project" value="UniProtKB-SubCell"/>
</dbReference>
<dbReference type="InterPro" id="IPR007383">
    <property type="entry name" value="DUF445"/>
</dbReference>
<dbReference type="InterPro" id="IPR016991">
    <property type="entry name" value="UCP032178"/>
</dbReference>
<dbReference type="PANTHER" id="PTHR35791">
    <property type="entry name" value="UPF0754 MEMBRANE PROTEIN YHEB"/>
    <property type="match status" value="1"/>
</dbReference>
<dbReference type="PANTHER" id="PTHR35791:SF1">
    <property type="entry name" value="UPF0754 MEMBRANE PROTEIN YHEB"/>
    <property type="match status" value="1"/>
</dbReference>
<dbReference type="Pfam" id="PF04286">
    <property type="entry name" value="DUF445"/>
    <property type="match status" value="1"/>
</dbReference>
<dbReference type="PIRSF" id="PIRSF032178">
    <property type="entry name" value="UCP032178"/>
    <property type="match status" value="1"/>
</dbReference>
<gene>
    <name type="ordered locus">PCC8801_0398</name>
</gene>
<accession>B7JUB6</accession>
<sequence length="417" mass="47695">MSIIHLTTLNFSLLWTIALPPIAGTIIGYFTNDIAIKMLFRPYKAVYIGERRLPFTPGLIPRNQERLAKKISDTIMGSLLTPEELQNLARRLLQTERVQAAILWLLNLAIQQVKDDKNQKTAKILADILRDLFSESLPRLLKALARREDFLEQQINQIFDQVLLDFRLTDAQARQFADWLLETVVPPDVLRRTLIDFLTDRNIQVIDEGFREKTSGTYWVVANLFGLSNTLVRLRSFCLEEQELANTRLKEILLSLEVRSRLREWLQSLCLQNLPVSTVRQLRKTTRETVRSYIQESGADFLQNLGETVDWEQISILIMNRLQTSAALTTSLETISQELALILERYLEEDLEKIVAQAIPILSIDQVIINRVNATSPENLEMAIQGIVKSELQAIVNIGGVLGFLVGVFQSILLIFR</sequence>
<organism>
    <name type="scientific">Rippkaea orientalis (strain PCC 8801 / RF-1)</name>
    <name type="common">Cyanothece sp. (strain PCC 8801)</name>
    <dbReference type="NCBI Taxonomy" id="41431"/>
    <lineage>
        <taxon>Bacteria</taxon>
        <taxon>Bacillati</taxon>
        <taxon>Cyanobacteriota</taxon>
        <taxon>Cyanophyceae</taxon>
        <taxon>Oscillatoriophycideae</taxon>
        <taxon>Chroococcales</taxon>
        <taxon>Aphanothecaceae</taxon>
        <taxon>Rippkaea</taxon>
        <taxon>Rippkaea orientalis</taxon>
    </lineage>
</organism>
<feature type="chain" id="PRO_0000388290" description="UPF0754 membrane protein PCC8801_0398">
    <location>
        <begin position="1"/>
        <end position="417"/>
    </location>
</feature>
<feature type="transmembrane region" description="Helical" evidence="2">
    <location>
        <begin position="11"/>
        <end position="31"/>
    </location>
</feature>
<feature type="transmembrane region" description="Helical" evidence="2">
    <location>
        <begin position="395"/>
        <end position="415"/>
    </location>
</feature>
<protein>
    <recommendedName>
        <fullName>UPF0754 membrane protein PCC8801_0398</fullName>
    </recommendedName>
</protein>